<feature type="chain" id="PRO_1000123887" description="Probable protein kinase UbiB">
    <location>
        <begin position="1"/>
        <end position="544"/>
    </location>
</feature>
<feature type="transmembrane region" description="Helical" evidence="1">
    <location>
        <begin position="522"/>
        <end position="540"/>
    </location>
</feature>
<feature type="domain" description="Protein kinase" evidence="1">
    <location>
        <begin position="123"/>
        <end position="505"/>
    </location>
</feature>
<feature type="active site" description="Proton acceptor" evidence="1">
    <location>
        <position position="291"/>
    </location>
</feature>
<feature type="binding site" evidence="1">
    <location>
        <begin position="129"/>
        <end position="137"/>
    </location>
    <ligand>
        <name>ATP</name>
        <dbReference type="ChEBI" id="CHEBI:30616"/>
    </ligand>
</feature>
<feature type="binding site" evidence="1">
    <location>
        <position position="156"/>
    </location>
    <ligand>
        <name>ATP</name>
        <dbReference type="ChEBI" id="CHEBI:30616"/>
    </ligand>
</feature>
<name>UBIB_ACTP7</name>
<organism>
    <name type="scientific">Actinobacillus pleuropneumoniae serotype 7 (strain AP76)</name>
    <dbReference type="NCBI Taxonomy" id="537457"/>
    <lineage>
        <taxon>Bacteria</taxon>
        <taxon>Pseudomonadati</taxon>
        <taxon>Pseudomonadota</taxon>
        <taxon>Gammaproteobacteria</taxon>
        <taxon>Pasteurellales</taxon>
        <taxon>Pasteurellaceae</taxon>
        <taxon>Actinobacillus</taxon>
    </lineage>
</organism>
<proteinExistence type="inferred from homology"/>
<accession>B3GZD0</accession>
<keyword id="KW-0067">ATP-binding</keyword>
<keyword id="KW-0997">Cell inner membrane</keyword>
<keyword id="KW-1003">Cell membrane</keyword>
<keyword id="KW-0418">Kinase</keyword>
<keyword id="KW-0472">Membrane</keyword>
<keyword id="KW-0547">Nucleotide-binding</keyword>
<keyword id="KW-0808">Transferase</keyword>
<keyword id="KW-0812">Transmembrane</keyword>
<keyword id="KW-1133">Transmembrane helix</keyword>
<keyword id="KW-0831">Ubiquinone biosynthesis</keyword>
<evidence type="ECO:0000255" key="1">
    <source>
        <dbReference type="HAMAP-Rule" id="MF_00414"/>
    </source>
</evidence>
<dbReference type="EC" id="2.7.-.-" evidence="1"/>
<dbReference type="EMBL" id="CP001091">
    <property type="protein sequence ID" value="ACE62723.1"/>
    <property type="molecule type" value="Genomic_DNA"/>
</dbReference>
<dbReference type="RefSeq" id="WP_005618418.1">
    <property type="nucleotide sequence ID" value="NC_010939.1"/>
</dbReference>
<dbReference type="SMR" id="B3GZD0"/>
<dbReference type="KEGG" id="apa:APP7_2071"/>
<dbReference type="HOGENOM" id="CLU_006533_0_0_6"/>
<dbReference type="UniPathway" id="UPA00232"/>
<dbReference type="Proteomes" id="UP000001226">
    <property type="component" value="Chromosome"/>
</dbReference>
<dbReference type="GO" id="GO:0005886">
    <property type="term" value="C:plasma membrane"/>
    <property type="evidence" value="ECO:0007669"/>
    <property type="project" value="UniProtKB-SubCell"/>
</dbReference>
<dbReference type="GO" id="GO:0005524">
    <property type="term" value="F:ATP binding"/>
    <property type="evidence" value="ECO:0007669"/>
    <property type="project" value="UniProtKB-KW"/>
</dbReference>
<dbReference type="GO" id="GO:0004672">
    <property type="term" value="F:protein kinase activity"/>
    <property type="evidence" value="ECO:0007669"/>
    <property type="project" value="UniProtKB-UniRule"/>
</dbReference>
<dbReference type="GO" id="GO:0010795">
    <property type="term" value="P:regulation of ubiquinone biosynthetic process"/>
    <property type="evidence" value="ECO:0007669"/>
    <property type="project" value="UniProtKB-UniRule"/>
</dbReference>
<dbReference type="GO" id="GO:0006744">
    <property type="term" value="P:ubiquinone biosynthetic process"/>
    <property type="evidence" value="ECO:0007669"/>
    <property type="project" value="UniProtKB-UniPathway"/>
</dbReference>
<dbReference type="CDD" id="cd13972">
    <property type="entry name" value="UbiB"/>
    <property type="match status" value="1"/>
</dbReference>
<dbReference type="HAMAP" id="MF_00414">
    <property type="entry name" value="UbiB"/>
    <property type="match status" value="1"/>
</dbReference>
<dbReference type="InterPro" id="IPR004147">
    <property type="entry name" value="ABC1_dom"/>
</dbReference>
<dbReference type="InterPro" id="IPR011009">
    <property type="entry name" value="Kinase-like_dom_sf"/>
</dbReference>
<dbReference type="InterPro" id="IPR010232">
    <property type="entry name" value="UbiB"/>
</dbReference>
<dbReference type="InterPro" id="IPR045308">
    <property type="entry name" value="UbiB_bact"/>
</dbReference>
<dbReference type="InterPro" id="IPR050154">
    <property type="entry name" value="UbiB_kinase"/>
</dbReference>
<dbReference type="NCBIfam" id="NF003404">
    <property type="entry name" value="PRK04750.1"/>
    <property type="match status" value="1"/>
</dbReference>
<dbReference type="NCBIfam" id="TIGR01982">
    <property type="entry name" value="UbiB"/>
    <property type="match status" value="1"/>
</dbReference>
<dbReference type="PANTHER" id="PTHR10566">
    <property type="entry name" value="CHAPERONE-ACTIVITY OF BC1 COMPLEX CABC1 -RELATED"/>
    <property type="match status" value="1"/>
</dbReference>
<dbReference type="PANTHER" id="PTHR10566:SF113">
    <property type="entry name" value="PROTEIN ACTIVITY OF BC1 COMPLEX KINASE 7, CHLOROPLASTIC"/>
    <property type="match status" value="1"/>
</dbReference>
<dbReference type="Pfam" id="PF03109">
    <property type="entry name" value="ABC1"/>
    <property type="match status" value="1"/>
</dbReference>
<dbReference type="SUPFAM" id="SSF56112">
    <property type="entry name" value="Protein kinase-like (PK-like)"/>
    <property type="match status" value="1"/>
</dbReference>
<gene>
    <name evidence="1" type="primary">ubiB</name>
    <name type="ordered locus">APP7_2071</name>
</gene>
<sequence>MTCKNTRRLYQIITTFLRYGIDEIIPDIPLTRHARLGRKALFWVRNQHKDQPFGVRLRLALQELGPVWIKLGQMLSTRRDLFEPELAEQLALLQDSVEPFDGKSARQIIEQALGGSLETWFDEFDEQALASASIAQVHTAKFNQNQPLVGKDVVIKVIRPDIEPIIKADIALMYRLASWVPRLSNDARRLRATEVVREYEKTLLDELDLTREMANAIRLRNNFENSEMLYVPEMYPDFCHKNVIVMERIYGILVSDVETLKANGTDMKLLAERGVQVFFTQVFRDSFFHADMHAGNIFVNPNHPENPQYIGIDCGIVGTLNQNDKRYLAESFVAFFNRDYRRVALMHVESGWTPADTDIDAFEQAFREVCEPIFAKPLSEISFGHVLLNLFNVAREFNMEVQPQLVLLQKTLLYIEGLGRQVYPQLDLWQTAKPFLQNWLNEQVGVKAILRDLKQRAPQFREHFAEFPEAVFNALQQQKQINFRLDELNKTLQAQGRQKSHNVRSIVSGVIILGVLWRFDDLPLWLSCGTLVTVLLVLLLQRKS</sequence>
<protein>
    <recommendedName>
        <fullName evidence="1">Probable protein kinase UbiB</fullName>
        <ecNumber evidence="1">2.7.-.-</ecNumber>
    </recommendedName>
    <alternativeName>
        <fullName evidence="1">Ubiquinone biosynthesis protein UbiB</fullName>
    </alternativeName>
</protein>
<reference key="1">
    <citation type="submission" date="2008-06" db="EMBL/GenBank/DDBJ databases">
        <title>Genome and proteome analysis of A. pleuropneumoniae serotype 7.</title>
        <authorList>
            <person name="Linke B."/>
            <person name="Buettner F."/>
            <person name="Martinez-Arias R."/>
            <person name="Goesmann A."/>
            <person name="Baltes N."/>
            <person name="Tegetmeyer H."/>
            <person name="Singh M."/>
            <person name="Gerlach G.F."/>
        </authorList>
    </citation>
    <scope>NUCLEOTIDE SEQUENCE [LARGE SCALE GENOMIC DNA]</scope>
    <source>
        <strain>AP76</strain>
    </source>
</reference>
<comment type="function">
    <text evidence="1">Is probably a protein kinase regulator of UbiI activity which is involved in aerobic coenzyme Q (ubiquinone) biosynthesis.</text>
</comment>
<comment type="pathway">
    <text>Cofactor biosynthesis; ubiquinone biosynthesis [regulation].</text>
</comment>
<comment type="subcellular location">
    <subcellularLocation>
        <location evidence="1">Cell inner membrane</location>
        <topology evidence="1">Single-pass membrane protein</topology>
    </subcellularLocation>
</comment>
<comment type="similarity">
    <text evidence="1">Belongs to the ABC1 family. UbiB subfamily.</text>
</comment>